<keyword id="KW-1185">Reference proteome</keyword>
<keyword id="KW-0677">Repeat</keyword>
<dbReference type="EMBL" id="AL163972">
    <property type="protein sequence ID" value="CAB88058.1"/>
    <property type="molecule type" value="Genomic_DNA"/>
</dbReference>
<dbReference type="EMBL" id="CP002686">
    <property type="protein sequence ID" value="AEE79534.1"/>
    <property type="molecule type" value="Genomic_DNA"/>
</dbReference>
<dbReference type="EMBL" id="CP002686">
    <property type="protein sequence ID" value="ANM63885.1"/>
    <property type="molecule type" value="Genomic_DNA"/>
</dbReference>
<dbReference type="EMBL" id="DQ446769">
    <property type="protein sequence ID" value="ABE66020.1"/>
    <property type="molecule type" value="mRNA"/>
</dbReference>
<dbReference type="PIR" id="T49056">
    <property type="entry name" value="T49056"/>
</dbReference>
<dbReference type="RefSeq" id="NP_001319768.1">
    <property type="nucleotide sequence ID" value="NM_001339801.1"/>
</dbReference>
<dbReference type="RefSeq" id="NP_191214.1">
    <property type="nucleotide sequence ID" value="NM_115513.3"/>
</dbReference>
<dbReference type="SMR" id="Q9LXY5"/>
<dbReference type="FunCoup" id="Q9LXY5">
    <property type="interactions" value="12"/>
</dbReference>
<dbReference type="STRING" id="3702.Q9LXY5"/>
<dbReference type="iPTMnet" id="Q9LXY5"/>
<dbReference type="PaxDb" id="3702-AT3G56550.1"/>
<dbReference type="ProteomicsDB" id="249195"/>
<dbReference type="EnsemblPlants" id="AT3G56550.1">
    <property type="protein sequence ID" value="AT3G56550.1"/>
    <property type="gene ID" value="AT3G56550"/>
</dbReference>
<dbReference type="EnsemblPlants" id="AT3G56550.2">
    <property type="protein sequence ID" value="AT3G56550.2"/>
    <property type="gene ID" value="AT3G56550"/>
</dbReference>
<dbReference type="GeneID" id="824822"/>
<dbReference type="Gramene" id="AT3G56550.1">
    <property type="protein sequence ID" value="AT3G56550.1"/>
    <property type="gene ID" value="AT3G56550"/>
</dbReference>
<dbReference type="Gramene" id="AT3G56550.2">
    <property type="protein sequence ID" value="AT3G56550.2"/>
    <property type="gene ID" value="AT3G56550"/>
</dbReference>
<dbReference type="KEGG" id="ath:AT3G56550"/>
<dbReference type="Araport" id="AT3G56550"/>
<dbReference type="TAIR" id="AT3G56550"/>
<dbReference type="eggNOG" id="KOG4197">
    <property type="taxonomic scope" value="Eukaryota"/>
</dbReference>
<dbReference type="HOGENOM" id="CLU_002706_37_8_1"/>
<dbReference type="InParanoid" id="Q9LXY5"/>
<dbReference type="OMA" id="CLRIVKN"/>
<dbReference type="PhylomeDB" id="Q9LXY5"/>
<dbReference type="PRO" id="PR:Q9LXY5"/>
<dbReference type="Proteomes" id="UP000006548">
    <property type="component" value="Chromosome 3"/>
</dbReference>
<dbReference type="ExpressionAtlas" id="Q9LXY5">
    <property type="expression patterns" value="baseline and differential"/>
</dbReference>
<dbReference type="GO" id="GO:0003723">
    <property type="term" value="F:RNA binding"/>
    <property type="evidence" value="ECO:0007669"/>
    <property type="project" value="InterPro"/>
</dbReference>
<dbReference type="GO" id="GO:0008270">
    <property type="term" value="F:zinc ion binding"/>
    <property type="evidence" value="ECO:0007669"/>
    <property type="project" value="InterPro"/>
</dbReference>
<dbReference type="GO" id="GO:0009451">
    <property type="term" value="P:RNA modification"/>
    <property type="evidence" value="ECO:0007669"/>
    <property type="project" value="InterPro"/>
</dbReference>
<dbReference type="FunFam" id="1.25.40.10:FF:001394">
    <property type="entry name" value="Pentatricopeptide repeat-containing protein At3g28660"/>
    <property type="match status" value="1"/>
</dbReference>
<dbReference type="FunFam" id="1.25.40.10:FF:000073">
    <property type="entry name" value="Pentatricopeptide repeat-containing protein chloroplastic"/>
    <property type="match status" value="1"/>
</dbReference>
<dbReference type="FunFam" id="1.25.40.10:FF:001213">
    <property type="entry name" value="Pentatricopeptide repeat-containing protein, mitochondrial"/>
    <property type="match status" value="1"/>
</dbReference>
<dbReference type="Gene3D" id="1.25.40.10">
    <property type="entry name" value="Tetratricopeptide repeat domain"/>
    <property type="match status" value="3"/>
</dbReference>
<dbReference type="InterPro" id="IPR032867">
    <property type="entry name" value="DYW_dom"/>
</dbReference>
<dbReference type="InterPro" id="IPR046848">
    <property type="entry name" value="E_motif"/>
</dbReference>
<dbReference type="InterPro" id="IPR002885">
    <property type="entry name" value="Pentatricopeptide_rpt"/>
</dbReference>
<dbReference type="InterPro" id="IPR046960">
    <property type="entry name" value="PPR_At4g14850-like_plant"/>
</dbReference>
<dbReference type="InterPro" id="IPR011990">
    <property type="entry name" value="TPR-like_helical_dom_sf"/>
</dbReference>
<dbReference type="NCBIfam" id="TIGR00756">
    <property type="entry name" value="PPR"/>
    <property type="match status" value="3"/>
</dbReference>
<dbReference type="PANTHER" id="PTHR47926:SF408">
    <property type="entry name" value="DYW DOMAIN-CONTAINING PROTEIN"/>
    <property type="match status" value="1"/>
</dbReference>
<dbReference type="PANTHER" id="PTHR47926">
    <property type="entry name" value="PENTATRICOPEPTIDE REPEAT-CONTAINING PROTEIN"/>
    <property type="match status" value="1"/>
</dbReference>
<dbReference type="Pfam" id="PF14432">
    <property type="entry name" value="DYW_deaminase"/>
    <property type="match status" value="1"/>
</dbReference>
<dbReference type="Pfam" id="PF20431">
    <property type="entry name" value="E_motif"/>
    <property type="match status" value="1"/>
</dbReference>
<dbReference type="Pfam" id="PF01535">
    <property type="entry name" value="PPR"/>
    <property type="match status" value="2"/>
</dbReference>
<dbReference type="Pfam" id="PF13041">
    <property type="entry name" value="PPR_2"/>
    <property type="match status" value="2"/>
</dbReference>
<dbReference type="PROSITE" id="PS51375">
    <property type="entry name" value="PPR"/>
    <property type="match status" value="8"/>
</dbReference>
<feature type="chain" id="PRO_0000356143" description="Pentatricopeptide repeat-containing protein At3g56550">
    <location>
        <begin position="1"/>
        <end position="581"/>
    </location>
</feature>
<feature type="repeat" description="PPR 1">
    <location>
        <begin position="70"/>
        <end position="104"/>
    </location>
</feature>
<feature type="repeat" description="PPR 2">
    <location>
        <begin position="106"/>
        <end position="140"/>
    </location>
</feature>
<feature type="repeat" description="PPR 3">
    <location>
        <begin position="141"/>
        <end position="171"/>
    </location>
</feature>
<feature type="repeat" description="PPR 4">
    <location>
        <begin position="172"/>
        <end position="206"/>
    </location>
</feature>
<feature type="repeat" description="PPR 5">
    <location>
        <begin position="207"/>
        <end position="241"/>
    </location>
</feature>
<feature type="repeat" description="PPR 6">
    <location>
        <begin position="242"/>
        <end position="272"/>
    </location>
</feature>
<feature type="repeat" description="PPR 7">
    <location>
        <begin position="273"/>
        <end position="307"/>
    </location>
</feature>
<feature type="repeat" description="PPR 8">
    <location>
        <begin position="308"/>
        <end position="338"/>
    </location>
</feature>
<feature type="repeat" description="PPR 9">
    <location>
        <begin position="344"/>
        <end position="378"/>
    </location>
</feature>
<feature type="region of interest" description="Type E motif">
    <location>
        <begin position="379"/>
        <end position="454"/>
    </location>
</feature>
<feature type="region of interest" description="Type E(+) motif">
    <location>
        <begin position="455"/>
        <end position="485"/>
    </location>
</feature>
<feature type="region of interest" description="Type DYW motif">
    <location>
        <begin position="486"/>
        <end position="581"/>
    </location>
</feature>
<organism>
    <name type="scientific">Arabidopsis thaliana</name>
    <name type="common">Mouse-ear cress</name>
    <dbReference type="NCBI Taxonomy" id="3702"/>
    <lineage>
        <taxon>Eukaryota</taxon>
        <taxon>Viridiplantae</taxon>
        <taxon>Streptophyta</taxon>
        <taxon>Embryophyta</taxon>
        <taxon>Tracheophyta</taxon>
        <taxon>Spermatophyta</taxon>
        <taxon>Magnoliopsida</taxon>
        <taxon>eudicotyledons</taxon>
        <taxon>Gunneridae</taxon>
        <taxon>Pentapetalae</taxon>
        <taxon>rosids</taxon>
        <taxon>malvids</taxon>
        <taxon>Brassicales</taxon>
        <taxon>Brassicaceae</taxon>
        <taxon>Camelineae</taxon>
        <taxon>Arabidopsis</taxon>
    </lineage>
</organism>
<evidence type="ECO:0000305" key="1"/>
<reference key="1">
    <citation type="journal article" date="2000" name="Nature">
        <title>Sequence and analysis of chromosome 3 of the plant Arabidopsis thaliana.</title>
        <authorList>
            <person name="Salanoubat M."/>
            <person name="Lemcke K."/>
            <person name="Rieger M."/>
            <person name="Ansorge W."/>
            <person name="Unseld M."/>
            <person name="Fartmann B."/>
            <person name="Valle G."/>
            <person name="Bloecker H."/>
            <person name="Perez-Alonso M."/>
            <person name="Obermaier B."/>
            <person name="Delseny M."/>
            <person name="Boutry M."/>
            <person name="Grivell L.A."/>
            <person name="Mache R."/>
            <person name="Puigdomenech P."/>
            <person name="De Simone V."/>
            <person name="Choisne N."/>
            <person name="Artiguenave F."/>
            <person name="Robert C."/>
            <person name="Brottier P."/>
            <person name="Wincker P."/>
            <person name="Cattolico L."/>
            <person name="Weissenbach J."/>
            <person name="Saurin W."/>
            <person name="Quetier F."/>
            <person name="Schaefer M."/>
            <person name="Mueller-Auer S."/>
            <person name="Gabel C."/>
            <person name="Fuchs M."/>
            <person name="Benes V."/>
            <person name="Wurmbach E."/>
            <person name="Drzonek H."/>
            <person name="Erfle H."/>
            <person name="Jordan N."/>
            <person name="Bangert S."/>
            <person name="Wiedelmann R."/>
            <person name="Kranz H."/>
            <person name="Voss H."/>
            <person name="Holland R."/>
            <person name="Brandt P."/>
            <person name="Nyakatura G."/>
            <person name="Vezzi A."/>
            <person name="D'Angelo M."/>
            <person name="Pallavicini A."/>
            <person name="Toppo S."/>
            <person name="Simionati B."/>
            <person name="Conrad A."/>
            <person name="Hornischer K."/>
            <person name="Kauer G."/>
            <person name="Loehnert T.-H."/>
            <person name="Nordsiek G."/>
            <person name="Reichelt J."/>
            <person name="Scharfe M."/>
            <person name="Schoen O."/>
            <person name="Bargues M."/>
            <person name="Terol J."/>
            <person name="Climent J."/>
            <person name="Navarro P."/>
            <person name="Collado C."/>
            <person name="Perez-Perez A."/>
            <person name="Ottenwaelder B."/>
            <person name="Duchemin D."/>
            <person name="Cooke R."/>
            <person name="Laudie M."/>
            <person name="Berger-Llauro C."/>
            <person name="Purnelle B."/>
            <person name="Masuy D."/>
            <person name="de Haan M."/>
            <person name="Maarse A.C."/>
            <person name="Alcaraz J.-P."/>
            <person name="Cottet A."/>
            <person name="Casacuberta E."/>
            <person name="Monfort A."/>
            <person name="Argiriou A."/>
            <person name="Flores M."/>
            <person name="Liguori R."/>
            <person name="Vitale D."/>
            <person name="Mannhaupt G."/>
            <person name="Haase D."/>
            <person name="Schoof H."/>
            <person name="Rudd S."/>
            <person name="Zaccaria P."/>
            <person name="Mewes H.-W."/>
            <person name="Mayer K.F.X."/>
            <person name="Kaul S."/>
            <person name="Town C.D."/>
            <person name="Koo H.L."/>
            <person name="Tallon L.J."/>
            <person name="Jenkins J."/>
            <person name="Rooney T."/>
            <person name="Rizzo M."/>
            <person name="Walts A."/>
            <person name="Utterback T."/>
            <person name="Fujii C.Y."/>
            <person name="Shea T.P."/>
            <person name="Creasy T.H."/>
            <person name="Haas B."/>
            <person name="Maiti R."/>
            <person name="Wu D."/>
            <person name="Peterson J."/>
            <person name="Van Aken S."/>
            <person name="Pai G."/>
            <person name="Militscher J."/>
            <person name="Sellers P."/>
            <person name="Gill J.E."/>
            <person name="Feldblyum T.V."/>
            <person name="Preuss D."/>
            <person name="Lin X."/>
            <person name="Nierman W.C."/>
            <person name="Salzberg S.L."/>
            <person name="White O."/>
            <person name="Venter J.C."/>
            <person name="Fraser C.M."/>
            <person name="Kaneko T."/>
            <person name="Nakamura Y."/>
            <person name="Sato S."/>
            <person name="Kato T."/>
            <person name="Asamizu E."/>
            <person name="Sasamoto S."/>
            <person name="Kimura T."/>
            <person name="Idesawa K."/>
            <person name="Kawashima K."/>
            <person name="Kishida Y."/>
            <person name="Kiyokawa C."/>
            <person name="Kohara M."/>
            <person name="Matsumoto M."/>
            <person name="Matsuno A."/>
            <person name="Muraki A."/>
            <person name="Nakayama S."/>
            <person name="Nakazaki N."/>
            <person name="Shinpo S."/>
            <person name="Takeuchi C."/>
            <person name="Wada T."/>
            <person name="Watanabe A."/>
            <person name="Yamada M."/>
            <person name="Yasuda M."/>
            <person name="Tabata S."/>
        </authorList>
    </citation>
    <scope>NUCLEOTIDE SEQUENCE [LARGE SCALE GENOMIC DNA]</scope>
    <source>
        <strain>cv. Columbia</strain>
    </source>
</reference>
<reference key="2">
    <citation type="journal article" date="2017" name="Plant J.">
        <title>Araport11: a complete reannotation of the Arabidopsis thaliana reference genome.</title>
        <authorList>
            <person name="Cheng C.Y."/>
            <person name="Krishnakumar V."/>
            <person name="Chan A.P."/>
            <person name="Thibaud-Nissen F."/>
            <person name="Schobel S."/>
            <person name="Town C.D."/>
        </authorList>
    </citation>
    <scope>GENOME REANNOTATION</scope>
    <source>
        <strain>cv. Columbia</strain>
    </source>
</reference>
<reference key="3">
    <citation type="journal article" date="2006" name="Plant Biotechnol. J.">
        <title>Simultaneous high-throughput recombinational cloning of open reading frames in closed and open configurations.</title>
        <authorList>
            <person name="Underwood B.A."/>
            <person name="Vanderhaeghen R."/>
            <person name="Whitford R."/>
            <person name="Town C.D."/>
            <person name="Hilson P."/>
        </authorList>
    </citation>
    <scope>NUCLEOTIDE SEQUENCE [LARGE SCALE MRNA]</scope>
    <source>
        <strain>cv. Columbia</strain>
    </source>
</reference>
<reference key="4">
    <citation type="journal article" date="2004" name="Plant Cell">
        <title>Genome-wide analysis of Arabidopsis pentatricopeptide repeat proteins reveals their essential role in organelle biogenesis.</title>
        <authorList>
            <person name="Lurin C."/>
            <person name="Andres C."/>
            <person name="Aubourg S."/>
            <person name="Bellaoui M."/>
            <person name="Bitton F."/>
            <person name="Bruyere C."/>
            <person name="Caboche M."/>
            <person name="Debast C."/>
            <person name="Gualberto J."/>
            <person name="Hoffmann B."/>
            <person name="Lecharny A."/>
            <person name="Le Ret M."/>
            <person name="Martin-Magniette M.-L."/>
            <person name="Mireau H."/>
            <person name="Peeters N."/>
            <person name="Renou J.-P."/>
            <person name="Szurek B."/>
            <person name="Taconnat L."/>
            <person name="Small I."/>
        </authorList>
    </citation>
    <scope>GENE FAMILY</scope>
</reference>
<proteinExistence type="evidence at transcript level"/>
<accession>Q9LXY5</accession>
<protein>
    <recommendedName>
        <fullName>Pentatricopeptide repeat-containing protein At3g56550</fullName>
    </recommendedName>
</protein>
<comment type="similarity">
    <text evidence="1">Belongs to the PPR family. PCMP-H subfamily.</text>
</comment>
<comment type="online information" name="Pentatricopeptide repeat proteins">
    <link uri="https://ppr.plantenergy.uwa.edu.au"/>
</comment>
<sequence>MCEKARVIVRMLQGCNSMKKLRKIHSHVIINGLQHHPSIFNHLLRFCAVSVTGSLSHAQLLFDHFDSDPSTSDWNYLIRGFSNSSSPLNSILFYNRMLLSSVSRPDLFTFNFALKSCERIKSIPKCLEIHGSVIRSGFLDDAIVATSLVRCYSANGSVEIASKVFDEMPVRDLVSWNVMICCFSHVGLHNQALSMYKRMGNEGVCGDSYTLVALLSSCAHVSALNMGVMLHRIACDIRCESCVFVSNALIDMYAKCGSLENAIGVFNGMRKRDVLTWNSMIIGYGVHGHGVEAISFFRKMVASGVRPNAITFLGLLLGCSHQGLVKEGVEHFEIMSSQFHLTPNVKHYGCMVDLYGRAGQLENSLEMIYASSCHEDPVLWRTLLGSCKIHRNLELGEVAMKKLVQLEAFNAGDYVLMTSIYSAANDAQAFASMRKLIRSHDLQTVPGWSWIEIGDQVHKFVVDDKMHPESAVIYSELGEVINRAILAGYKPEDSNRTAPTLSDRCLGSADTSHSEKLAIAYGLMRTTAGTTLRITKNLRVCRDCHSFTKYVSKAFNREIIVRDRVRFHHFADGICSCNDYW</sequence>
<name>PP284_ARATH</name>
<gene>
    <name type="primary">PCMP-H80</name>
    <name type="ordered locus">At3g56550</name>
    <name type="ORF">T5P19_200</name>
</gene>